<keyword id="KW-0963">Cytoplasm</keyword>
<keyword id="KW-0378">Hydrolase</keyword>
<dbReference type="EC" id="3.5.1.5" evidence="1"/>
<dbReference type="EMBL" id="CP000736">
    <property type="protein sequence ID" value="ABR53181.1"/>
    <property type="molecule type" value="Genomic_DNA"/>
</dbReference>
<dbReference type="SMR" id="A6U413"/>
<dbReference type="KEGG" id="sah:SaurJH1_2356"/>
<dbReference type="HOGENOM" id="CLU_129707_2_2_9"/>
<dbReference type="UniPathway" id="UPA00258">
    <property type="reaction ID" value="UER00370"/>
</dbReference>
<dbReference type="GO" id="GO:0035550">
    <property type="term" value="C:urease complex"/>
    <property type="evidence" value="ECO:0007669"/>
    <property type="project" value="InterPro"/>
</dbReference>
<dbReference type="GO" id="GO:0009039">
    <property type="term" value="F:urease activity"/>
    <property type="evidence" value="ECO:0007669"/>
    <property type="project" value="UniProtKB-UniRule"/>
</dbReference>
<dbReference type="GO" id="GO:0043419">
    <property type="term" value="P:urea catabolic process"/>
    <property type="evidence" value="ECO:0007669"/>
    <property type="project" value="UniProtKB-UniRule"/>
</dbReference>
<dbReference type="CDD" id="cd00407">
    <property type="entry name" value="Urease_beta"/>
    <property type="match status" value="1"/>
</dbReference>
<dbReference type="FunFam" id="2.10.150.10:FF:000001">
    <property type="entry name" value="Urease subunit beta"/>
    <property type="match status" value="1"/>
</dbReference>
<dbReference type="Gene3D" id="2.10.150.10">
    <property type="entry name" value="Urease, beta subunit"/>
    <property type="match status" value="1"/>
</dbReference>
<dbReference type="HAMAP" id="MF_01954">
    <property type="entry name" value="Urease_beta"/>
    <property type="match status" value="1"/>
</dbReference>
<dbReference type="InterPro" id="IPR002019">
    <property type="entry name" value="Urease_beta-like"/>
</dbReference>
<dbReference type="InterPro" id="IPR036461">
    <property type="entry name" value="Urease_betasu_sf"/>
</dbReference>
<dbReference type="InterPro" id="IPR050069">
    <property type="entry name" value="Urease_subunit"/>
</dbReference>
<dbReference type="NCBIfam" id="NF009682">
    <property type="entry name" value="PRK13203.1"/>
    <property type="match status" value="1"/>
</dbReference>
<dbReference type="NCBIfam" id="TIGR00192">
    <property type="entry name" value="urease_beta"/>
    <property type="match status" value="1"/>
</dbReference>
<dbReference type="PANTHER" id="PTHR33569">
    <property type="entry name" value="UREASE"/>
    <property type="match status" value="1"/>
</dbReference>
<dbReference type="PANTHER" id="PTHR33569:SF1">
    <property type="entry name" value="UREASE"/>
    <property type="match status" value="1"/>
</dbReference>
<dbReference type="Pfam" id="PF00699">
    <property type="entry name" value="Urease_beta"/>
    <property type="match status" value="1"/>
</dbReference>
<dbReference type="SUPFAM" id="SSF51278">
    <property type="entry name" value="Urease, beta-subunit"/>
    <property type="match status" value="1"/>
</dbReference>
<sequence>MIPGEIITKSTEVEINNHHPETVIEVENTGDRPIQVGSHFHFYEANAALDFEREMAYGKHLDIPAGAAVRFEPGDKKEVQLVEYAGKRKIFGFRGMVNGPIDESRVYRPTDENDAYAGVFGDNGAENVNKKGGKRS</sequence>
<protein>
    <recommendedName>
        <fullName evidence="1">Urease subunit beta</fullName>
        <ecNumber evidence="1">3.5.1.5</ecNumber>
    </recommendedName>
    <alternativeName>
        <fullName evidence="1">Urea amidohydrolase subunit beta</fullName>
    </alternativeName>
</protein>
<feature type="chain" id="PRO_1000088510" description="Urease subunit beta">
    <location>
        <begin position="1"/>
        <end position="136"/>
    </location>
</feature>
<accession>A6U413</accession>
<evidence type="ECO:0000255" key="1">
    <source>
        <dbReference type="HAMAP-Rule" id="MF_01954"/>
    </source>
</evidence>
<name>URE2_STAA2</name>
<reference key="1">
    <citation type="submission" date="2007-06" db="EMBL/GenBank/DDBJ databases">
        <title>Complete sequence of chromosome of Staphylococcus aureus subsp. aureus JH1.</title>
        <authorList>
            <consortium name="US DOE Joint Genome Institute"/>
            <person name="Copeland A."/>
            <person name="Lucas S."/>
            <person name="Lapidus A."/>
            <person name="Barry K."/>
            <person name="Detter J.C."/>
            <person name="Glavina del Rio T."/>
            <person name="Hammon N."/>
            <person name="Israni S."/>
            <person name="Dalin E."/>
            <person name="Tice H."/>
            <person name="Pitluck S."/>
            <person name="Chain P."/>
            <person name="Malfatti S."/>
            <person name="Shin M."/>
            <person name="Vergez L."/>
            <person name="Schmutz J."/>
            <person name="Larimer F."/>
            <person name="Land M."/>
            <person name="Hauser L."/>
            <person name="Kyrpides N."/>
            <person name="Ivanova N."/>
            <person name="Tomasz A."/>
            <person name="Richardson P."/>
        </authorList>
    </citation>
    <scope>NUCLEOTIDE SEQUENCE [LARGE SCALE GENOMIC DNA]</scope>
    <source>
        <strain>JH1</strain>
    </source>
</reference>
<gene>
    <name evidence="1" type="primary">ureB</name>
    <name type="ordered locus">SaurJH1_2356</name>
</gene>
<comment type="catalytic activity">
    <reaction evidence="1">
        <text>urea + 2 H2O + H(+) = hydrogencarbonate + 2 NH4(+)</text>
        <dbReference type="Rhea" id="RHEA:20557"/>
        <dbReference type="ChEBI" id="CHEBI:15377"/>
        <dbReference type="ChEBI" id="CHEBI:15378"/>
        <dbReference type="ChEBI" id="CHEBI:16199"/>
        <dbReference type="ChEBI" id="CHEBI:17544"/>
        <dbReference type="ChEBI" id="CHEBI:28938"/>
        <dbReference type="EC" id="3.5.1.5"/>
    </reaction>
</comment>
<comment type="pathway">
    <text evidence="1">Nitrogen metabolism; urea degradation; CO(2) and NH(3) from urea (urease route): step 1/1.</text>
</comment>
<comment type="subunit">
    <text evidence="1">Heterotrimer of UreA (gamma), UreB (beta) and UreC (alpha) subunits. Three heterotrimers associate to form the active enzyme.</text>
</comment>
<comment type="subcellular location">
    <subcellularLocation>
        <location evidence="1">Cytoplasm</location>
    </subcellularLocation>
</comment>
<comment type="similarity">
    <text evidence="1">Belongs to the urease beta subunit family.</text>
</comment>
<organism>
    <name type="scientific">Staphylococcus aureus (strain JH1)</name>
    <dbReference type="NCBI Taxonomy" id="359787"/>
    <lineage>
        <taxon>Bacteria</taxon>
        <taxon>Bacillati</taxon>
        <taxon>Bacillota</taxon>
        <taxon>Bacilli</taxon>
        <taxon>Bacillales</taxon>
        <taxon>Staphylococcaceae</taxon>
        <taxon>Staphylococcus</taxon>
    </lineage>
</organism>
<proteinExistence type="inferred from homology"/>